<proteinExistence type="evidence at protein level"/>
<dbReference type="EC" id="2.7.1.23"/>
<dbReference type="EMBL" id="AC007727">
    <property type="protein sequence ID" value="AAD41416.1"/>
    <property type="status" value="ALT_SEQ"/>
    <property type="molecule type" value="Genomic_DNA"/>
</dbReference>
<dbReference type="EMBL" id="CP002684">
    <property type="protein sequence ID" value="AEE30130.1"/>
    <property type="molecule type" value="Genomic_DNA"/>
</dbReference>
<dbReference type="EMBL" id="AF337912">
    <property type="protein sequence ID" value="AAG60064.1"/>
    <property type="molecule type" value="mRNA"/>
</dbReference>
<dbReference type="EMBL" id="AY099794">
    <property type="protein sequence ID" value="AAM20645.1"/>
    <property type="molecule type" value="mRNA"/>
</dbReference>
<dbReference type="PIR" id="D86349">
    <property type="entry name" value="D86349"/>
</dbReference>
<dbReference type="RefSeq" id="NP_564145.1">
    <molecule id="Q9C5W3-1"/>
    <property type="nucleotide sequence ID" value="NM_102013.5"/>
</dbReference>
<dbReference type="SMR" id="Q9C5W3"/>
<dbReference type="FunCoup" id="Q9C5W3">
    <property type="interactions" value="1849"/>
</dbReference>
<dbReference type="STRING" id="3702.Q9C5W3"/>
<dbReference type="PaxDb" id="3702-AT1G21640.2"/>
<dbReference type="ProteomicsDB" id="251080">
    <molecule id="Q9C5W3-1"/>
</dbReference>
<dbReference type="EnsemblPlants" id="AT1G21640.1">
    <molecule id="Q9C5W3-1"/>
    <property type="protein sequence ID" value="AT1G21640.1"/>
    <property type="gene ID" value="AT1G21640"/>
</dbReference>
<dbReference type="GeneID" id="838766"/>
<dbReference type="Gramene" id="AT1G21640.1">
    <molecule id="Q9C5W3-1"/>
    <property type="protein sequence ID" value="AT1G21640.1"/>
    <property type="gene ID" value="AT1G21640"/>
</dbReference>
<dbReference type="KEGG" id="ath:AT1G21640"/>
<dbReference type="Araport" id="AT1G21640"/>
<dbReference type="TAIR" id="AT1G21640">
    <property type="gene designation" value="NADK2"/>
</dbReference>
<dbReference type="eggNOG" id="KOG2178">
    <property type="taxonomic scope" value="Eukaryota"/>
</dbReference>
<dbReference type="InParanoid" id="Q9C5W3"/>
<dbReference type="OMA" id="DCEASDM"/>
<dbReference type="PhylomeDB" id="Q9C5W3"/>
<dbReference type="BRENDA" id="2.7.1.23">
    <property type="organism ID" value="399"/>
</dbReference>
<dbReference type="PRO" id="PR:Q9C5W3"/>
<dbReference type="Proteomes" id="UP000006548">
    <property type="component" value="Chromosome 1"/>
</dbReference>
<dbReference type="ExpressionAtlas" id="Q9C5W3">
    <property type="expression patterns" value="baseline and differential"/>
</dbReference>
<dbReference type="GO" id="GO:0009507">
    <property type="term" value="C:chloroplast"/>
    <property type="evidence" value="ECO:0007669"/>
    <property type="project" value="UniProtKB-SubCell"/>
</dbReference>
<dbReference type="GO" id="GO:0005524">
    <property type="term" value="F:ATP binding"/>
    <property type="evidence" value="ECO:0007669"/>
    <property type="project" value="UniProtKB-KW"/>
</dbReference>
<dbReference type="GO" id="GO:0005516">
    <property type="term" value="F:calmodulin binding"/>
    <property type="evidence" value="ECO:0007669"/>
    <property type="project" value="UniProtKB-KW"/>
</dbReference>
<dbReference type="GO" id="GO:0003951">
    <property type="term" value="F:NAD+ kinase activity"/>
    <property type="evidence" value="ECO:0007669"/>
    <property type="project" value="UniProtKB-EC"/>
</dbReference>
<dbReference type="GO" id="GO:0019674">
    <property type="term" value="P:NAD metabolic process"/>
    <property type="evidence" value="ECO:0007669"/>
    <property type="project" value="InterPro"/>
</dbReference>
<dbReference type="GO" id="GO:0006741">
    <property type="term" value="P:NADP biosynthetic process"/>
    <property type="evidence" value="ECO:0007669"/>
    <property type="project" value="InterPro"/>
</dbReference>
<dbReference type="FunFam" id="2.60.200.30:FF:000004">
    <property type="entry name" value="NAD kinase 2, chloroplastic"/>
    <property type="match status" value="1"/>
</dbReference>
<dbReference type="FunFam" id="3.40.50.10330:FF:000019">
    <property type="entry name" value="NAD kinase 2, chloroplastic"/>
    <property type="match status" value="1"/>
</dbReference>
<dbReference type="Gene3D" id="3.40.50.10330">
    <property type="entry name" value="Probable inorganic polyphosphate/atp-NAD kinase, domain 1"/>
    <property type="match status" value="1"/>
</dbReference>
<dbReference type="Gene3D" id="2.60.200.30">
    <property type="entry name" value="Probable inorganic polyphosphate/atp-NAD kinase, domain 2"/>
    <property type="match status" value="1"/>
</dbReference>
<dbReference type="Gene3D" id="3.90.190.10">
    <property type="entry name" value="Protein tyrosine phosphatase superfamily"/>
    <property type="match status" value="1"/>
</dbReference>
<dbReference type="HAMAP" id="MF_00361">
    <property type="entry name" value="NAD_kinase"/>
    <property type="match status" value="1"/>
</dbReference>
<dbReference type="InterPro" id="IPR017438">
    <property type="entry name" value="ATP-NAD_kinase_N"/>
</dbReference>
<dbReference type="InterPro" id="IPR017437">
    <property type="entry name" value="ATP-NAD_kinase_PpnK-typ_C"/>
</dbReference>
<dbReference type="InterPro" id="IPR016064">
    <property type="entry name" value="NAD/diacylglycerol_kinase_sf"/>
</dbReference>
<dbReference type="InterPro" id="IPR002504">
    <property type="entry name" value="NADK"/>
</dbReference>
<dbReference type="InterPro" id="IPR029021">
    <property type="entry name" value="Prot-tyrosine_phosphatase-like"/>
</dbReference>
<dbReference type="InterPro" id="IPR055214">
    <property type="entry name" value="PTP-NADK"/>
</dbReference>
<dbReference type="PANTHER" id="PTHR20275">
    <property type="entry name" value="NAD KINASE"/>
    <property type="match status" value="1"/>
</dbReference>
<dbReference type="PANTHER" id="PTHR20275:SF6">
    <property type="entry name" value="NAD KINASE 2, CHLOROPLASTIC"/>
    <property type="match status" value="1"/>
</dbReference>
<dbReference type="Pfam" id="PF01513">
    <property type="entry name" value="NAD_kinase"/>
    <property type="match status" value="1"/>
</dbReference>
<dbReference type="Pfam" id="PF20143">
    <property type="entry name" value="NAD_kinase_C"/>
    <property type="match status" value="1"/>
</dbReference>
<dbReference type="Pfam" id="PF22741">
    <property type="entry name" value="PTP-NADK"/>
    <property type="match status" value="1"/>
</dbReference>
<dbReference type="SUPFAM" id="SSF52799">
    <property type="entry name" value="(Phosphotyrosine protein) phosphatases II"/>
    <property type="match status" value="1"/>
</dbReference>
<dbReference type="SUPFAM" id="SSF111331">
    <property type="entry name" value="NAD kinase/diacylglycerol kinase-like"/>
    <property type="match status" value="1"/>
</dbReference>
<accession>Q9C5W3</accession>
<accession>Q9XI15</accession>
<name>NADK2_ARATH</name>
<sequence>MFLCFCPCHVPIMSRLSPATGISSRLRFSIGLSSDGRLIPFGFRFRRNDVPFKRRLRFVIRAQLSEAFSPDLGLDSQAVKSRDTSNLPWIGPVPGDIAEVEAYCRIFRSAERLHGALMETLCNPVTGECRVPYDFSPEEKPLLEDKIVSVLGCILSLLNKGRKEILSGRSSSMNSFNLDDVGVAEESLPPLAVFRGEMKRCCESLHIALENYLTPDDERSGIVWRKLQKLKNVCYDAGFPRSDNYPCQTLFANWDPIYSSNTKEDIDSYESEIAFWRGGQVTQEGLKWLIENGFKTIVDLRAEIVKDTFYQTALDDAISLGKITVVQIPIDVRMAPKAEQVELFASIVSDSSKRPIYVHSKEGVWRTSAMVSRWKQYMTRPITKEIPVSEESKRREVSETKLGSNAVVSGKGVPDEQTDKVSEINEVDSRSASSQSKESGRFEGDTSASEFNMVSDPLKSQVPPGNIFSRKEMSKFLKSKSIAPAGYLTNPSKILGTVPTPQFSYTGVTNGNQIVDKDSIRRLAETGNSNGTLLPTSSQSLDFGNGKFSNGNVHASDNTNKSISDNRGNGFSAAPIAVPPSDNLSRAVGSHSVRESQTQRNNSGSSSDSSDDEAGAIEGNMCASATGVVRVQSRKKAEMFLVRTDGVSCTREKVTESSLAFTHPSTQQQMLLWKTTPKTVLLLKKLGQELMEEAKEAASFLYHQENMNVLVEPEVHDVFARIPGFGFVQTFYIQDTSDLHERVDFVACLGGDGVILHASNLFKGAVPPVVSFNLGSLGFLTSHPFEDFRQDLKRVIHGNNTLDGVYITLRMRLRCEIYRKGKAMPGKVFDVLNEIVVDRGSNPYLSKIECYEHDRLITKVQGDGVIVATPTGSTAYSTAAGGSMVHPNVPCMLFTPICPHSLSFRPVILPDSAKLELKIPDDARSNAWVSFDGKRRQQLSRGDSVRIYMSQHPLPTVNKSDQTGDWFRSLIRCLNWNERLDQKAL</sequence>
<organism>
    <name type="scientific">Arabidopsis thaliana</name>
    <name type="common">Mouse-ear cress</name>
    <dbReference type="NCBI Taxonomy" id="3702"/>
    <lineage>
        <taxon>Eukaryota</taxon>
        <taxon>Viridiplantae</taxon>
        <taxon>Streptophyta</taxon>
        <taxon>Embryophyta</taxon>
        <taxon>Tracheophyta</taxon>
        <taxon>Spermatophyta</taxon>
        <taxon>Magnoliopsida</taxon>
        <taxon>eudicotyledons</taxon>
        <taxon>Gunneridae</taxon>
        <taxon>Pentapetalae</taxon>
        <taxon>rosids</taxon>
        <taxon>malvids</taxon>
        <taxon>Brassicales</taxon>
        <taxon>Brassicaceae</taxon>
        <taxon>Camelineae</taxon>
        <taxon>Arabidopsis</taxon>
    </lineage>
</organism>
<feature type="transit peptide" description="Chloroplast" evidence="5">
    <location>
        <begin position="1"/>
        <end position="62"/>
    </location>
</feature>
<feature type="chain" id="PRO_0000233705" description="NAD kinase 2, chloroplastic">
    <location>
        <begin position="63"/>
        <end position="985"/>
    </location>
</feature>
<feature type="region of interest" description="Calmodulin-binding">
    <location>
        <begin position="335"/>
        <end position="380"/>
    </location>
</feature>
<feature type="region of interest" description="Disordered" evidence="1">
    <location>
        <begin position="389"/>
        <end position="466"/>
    </location>
</feature>
<feature type="region of interest" description="Disordered" evidence="1">
    <location>
        <begin position="548"/>
        <end position="615"/>
    </location>
</feature>
<feature type="compositionally biased region" description="Basic and acidic residues" evidence="1">
    <location>
        <begin position="390"/>
        <end position="399"/>
    </location>
</feature>
<feature type="compositionally biased region" description="Basic and acidic residues" evidence="1">
    <location>
        <begin position="413"/>
        <end position="429"/>
    </location>
</feature>
<feature type="compositionally biased region" description="Polar residues" evidence="1">
    <location>
        <begin position="548"/>
        <end position="569"/>
    </location>
</feature>
<reference key="1">
    <citation type="journal article" date="2000" name="Nature">
        <title>Sequence and analysis of chromosome 1 of the plant Arabidopsis thaliana.</title>
        <authorList>
            <person name="Theologis A."/>
            <person name="Ecker J.R."/>
            <person name="Palm C.J."/>
            <person name="Federspiel N.A."/>
            <person name="Kaul S."/>
            <person name="White O."/>
            <person name="Alonso J."/>
            <person name="Altafi H."/>
            <person name="Araujo R."/>
            <person name="Bowman C.L."/>
            <person name="Brooks S.Y."/>
            <person name="Buehler E."/>
            <person name="Chan A."/>
            <person name="Chao Q."/>
            <person name="Chen H."/>
            <person name="Cheuk R.F."/>
            <person name="Chin C.W."/>
            <person name="Chung M.K."/>
            <person name="Conn L."/>
            <person name="Conway A.B."/>
            <person name="Conway A.R."/>
            <person name="Creasy T.H."/>
            <person name="Dewar K."/>
            <person name="Dunn P."/>
            <person name="Etgu P."/>
            <person name="Feldblyum T.V."/>
            <person name="Feng J.-D."/>
            <person name="Fong B."/>
            <person name="Fujii C.Y."/>
            <person name="Gill J.E."/>
            <person name="Goldsmith A.D."/>
            <person name="Haas B."/>
            <person name="Hansen N.F."/>
            <person name="Hughes B."/>
            <person name="Huizar L."/>
            <person name="Hunter J.L."/>
            <person name="Jenkins J."/>
            <person name="Johnson-Hopson C."/>
            <person name="Khan S."/>
            <person name="Khaykin E."/>
            <person name="Kim C.J."/>
            <person name="Koo H.L."/>
            <person name="Kremenetskaia I."/>
            <person name="Kurtz D.B."/>
            <person name="Kwan A."/>
            <person name="Lam B."/>
            <person name="Langin-Hooper S."/>
            <person name="Lee A."/>
            <person name="Lee J.M."/>
            <person name="Lenz C.A."/>
            <person name="Li J.H."/>
            <person name="Li Y.-P."/>
            <person name="Lin X."/>
            <person name="Liu S.X."/>
            <person name="Liu Z.A."/>
            <person name="Luros J.S."/>
            <person name="Maiti R."/>
            <person name="Marziali A."/>
            <person name="Militscher J."/>
            <person name="Miranda M."/>
            <person name="Nguyen M."/>
            <person name="Nierman W.C."/>
            <person name="Osborne B.I."/>
            <person name="Pai G."/>
            <person name="Peterson J."/>
            <person name="Pham P.K."/>
            <person name="Rizzo M."/>
            <person name="Rooney T."/>
            <person name="Rowley D."/>
            <person name="Sakano H."/>
            <person name="Salzberg S.L."/>
            <person name="Schwartz J.R."/>
            <person name="Shinn P."/>
            <person name="Southwick A.M."/>
            <person name="Sun H."/>
            <person name="Tallon L.J."/>
            <person name="Tambunga G."/>
            <person name="Toriumi M.J."/>
            <person name="Town C.D."/>
            <person name="Utterback T."/>
            <person name="Van Aken S."/>
            <person name="Vaysberg M."/>
            <person name="Vysotskaia V.S."/>
            <person name="Walker M."/>
            <person name="Wu D."/>
            <person name="Yu G."/>
            <person name="Fraser C.M."/>
            <person name="Venter J.C."/>
            <person name="Davis R.W."/>
        </authorList>
    </citation>
    <scope>NUCLEOTIDE SEQUENCE [LARGE SCALE GENOMIC DNA]</scope>
    <source>
        <strain>cv. Columbia</strain>
    </source>
</reference>
<reference key="2">
    <citation type="journal article" date="2017" name="Plant J.">
        <title>Araport11: a complete reannotation of the Arabidopsis thaliana reference genome.</title>
        <authorList>
            <person name="Cheng C.Y."/>
            <person name="Krishnakumar V."/>
            <person name="Chan A.P."/>
            <person name="Thibaud-Nissen F."/>
            <person name="Schobel S."/>
            <person name="Town C.D."/>
        </authorList>
    </citation>
    <scope>GENOME REANNOTATION</scope>
    <source>
        <strain>cv. Columbia</strain>
    </source>
</reference>
<reference key="3">
    <citation type="journal article" date="2003" name="Science">
        <title>Empirical analysis of transcriptional activity in the Arabidopsis genome.</title>
        <authorList>
            <person name="Yamada K."/>
            <person name="Lim J."/>
            <person name="Dale J.M."/>
            <person name="Chen H."/>
            <person name="Shinn P."/>
            <person name="Palm C.J."/>
            <person name="Southwick A.M."/>
            <person name="Wu H.C."/>
            <person name="Kim C.J."/>
            <person name="Nguyen M."/>
            <person name="Pham P.K."/>
            <person name="Cheuk R.F."/>
            <person name="Karlin-Newmann G."/>
            <person name="Liu S.X."/>
            <person name="Lam B."/>
            <person name="Sakano H."/>
            <person name="Wu T."/>
            <person name="Yu G."/>
            <person name="Miranda M."/>
            <person name="Quach H.L."/>
            <person name="Tripp M."/>
            <person name="Chang C.H."/>
            <person name="Lee J.M."/>
            <person name="Toriumi M.J."/>
            <person name="Chan M.M."/>
            <person name="Tang C.C."/>
            <person name="Onodera C.S."/>
            <person name="Deng J.M."/>
            <person name="Akiyama K."/>
            <person name="Ansari Y."/>
            <person name="Arakawa T."/>
            <person name="Banh J."/>
            <person name="Banno F."/>
            <person name="Bowser L."/>
            <person name="Brooks S.Y."/>
            <person name="Carninci P."/>
            <person name="Chao Q."/>
            <person name="Choy N."/>
            <person name="Enju A."/>
            <person name="Goldsmith A.D."/>
            <person name="Gurjal M."/>
            <person name="Hansen N.F."/>
            <person name="Hayashizaki Y."/>
            <person name="Johnson-Hopson C."/>
            <person name="Hsuan V.W."/>
            <person name="Iida K."/>
            <person name="Karnes M."/>
            <person name="Khan S."/>
            <person name="Koesema E."/>
            <person name="Ishida J."/>
            <person name="Jiang P.X."/>
            <person name="Jones T."/>
            <person name="Kawai J."/>
            <person name="Kamiya A."/>
            <person name="Meyers C."/>
            <person name="Nakajima M."/>
            <person name="Narusaka M."/>
            <person name="Seki M."/>
            <person name="Sakurai T."/>
            <person name="Satou M."/>
            <person name="Tamse R."/>
            <person name="Vaysberg M."/>
            <person name="Wallender E.K."/>
            <person name="Wong C."/>
            <person name="Yamamura Y."/>
            <person name="Yuan S."/>
            <person name="Shinozaki K."/>
            <person name="Davis R.W."/>
            <person name="Theologis A."/>
            <person name="Ecker J.R."/>
        </authorList>
    </citation>
    <scope>NUCLEOTIDE SEQUENCE [LARGE SCALE MRNA]</scope>
    <source>
        <strain>cv. Columbia</strain>
    </source>
</reference>
<reference key="4">
    <citation type="journal article" date="2004" name="Plant Physiol.">
        <title>Cloning and characterization of two NAD kinases from Arabidopsis. Identification of a calmodulin binding isoform.</title>
        <authorList>
            <person name="Turner W.L."/>
            <person name="Waller J.C."/>
            <person name="Vanderbeld B."/>
            <person name="Snedden W.A."/>
        </authorList>
    </citation>
    <scope>BIOPHYSICOCHEMICAL PROPERTIES</scope>
    <scope>DEVELOPMENTAL STAGE</scope>
    <scope>CALMODULIN-BINDING DOMAIN</scope>
</reference>
<reference key="5">
    <citation type="journal article" date="2005" name="Mol. Genet. Genomics">
        <title>Stress induces the expression of AtNADK-1, a gene encoding a NAD(H) kinase in Arabidopsis thaliana.</title>
        <authorList>
            <person name="Berrin J.-G."/>
            <person name="Pierrugues O."/>
            <person name="Brutesco C."/>
            <person name="Alonso B."/>
            <person name="Montillet J.-L."/>
            <person name="Roby D."/>
            <person name="Kazmaier M."/>
        </authorList>
    </citation>
    <scope>TISSUE SPECIFICITY</scope>
</reference>
<reference key="6">
    <citation type="journal article" date="2005" name="Plant Mol. Biol.">
        <title>NADK2, an Arabidopsis chloroplastic NAD kinase, plays a vital role in both chlorophyll synthesis and chloroplast protection.</title>
        <authorList>
            <person name="Chai M.-F."/>
            <person name="Chen Q.-J."/>
            <person name="An R."/>
            <person name="Chen Y.-M."/>
            <person name="Chen J."/>
            <person name="Wang X.-C."/>
        </authorList>
    </citation>
    <scope>FUNCTION</scope>
    <scope>SUBCELLULAR LOCATION</scope>
</reference>
<keyword id="KW-0025">Alternative splicing</keyword>
<keyword id="KW-0067">ATP-binding</keyword>
<keyword id="KW-0112">Calmodulin-binding</keyword>
<keyword id="KW-0150">Chloroplast</keyword>
<keyword id="KW-0418">Kinase</keyword>
<keyword id="KW-0520">NAD</keyword>
<keyword id="KW-0521">NADP</keyword>
<keyword id="KW-0547">Nucleotide-binding</keyword>
<keyword id="KW-0934">Plastid</keyword>
<keyword id="KW-1185">Reference proteome</keyword>
<keyword id="KW-0808">Transferase</keyword>
<keyword id="KW-0809">Transit peptide</keyword>
<evidence type="ECO:0000256" key="1">
    <source>
        <dbReference type="SAM" id="MobiDB-lite"/>
    </source>
</evidence>
<evidence type="ECO:0000269" key="2">
    <source>
    </source>
</evidence>
<evidence type="ECO:0000269" key="3">
    <source>
    </source>
</evidence>
<evidence type="ECO:0000269" key="4">
    <source>
    </source>
</evidence>
<evidence type="ECO:0000305" key="5"/>
<protein>
    <recommendedName>
        <fullName>NAD kinase 2, chloroplastic</fullName>
        <shortName>AtNADK-2</shortName>
        <ecNumber>2.7.1.23</ecNumber>
    </recommendedName>
</protein>
<comment type="function">
    <text evidence="4">Involved in chlorophyll synthesis and chloroplast protection against oxidative damage.</text>
</comment>
<comment type="catalytic activity">
    <reaction>
        <text>NAD(+) + ATP = ADP + NADP(+) + H(+)</text>
        <dbReference type="Rhea" id="RHEA:18629"/>
        <dbReference type="ChEBI" id="CHEBI:15378"/>
        <dbReference type="ChEBI" id="CHEBI:30616"/>
        <dbReference type="ChEBI" id="CHEBI:57540"/>
        <dbReference type="ChEBI" id="CHEBI:58349"/>
        <dbReference type="ChEBI" id="CHEBI:456216"/>
        <dbReference type="EC" id="2.7.1.23"/>
    </reaction>
</comment>
<comment type="biophysicochemical properties">
    <kinetics>
        <KM evidence="2">430 uM for NAD</KM>
        <KM evidence="2">740 uM for ATP</KM>
        <Vmax evidence="2">14.3 umol/h/mg enzyme with ATP as substrate</Vmax>
        <text>Measured at pH 7.9 and 25 degrees Celsius for all experiments.</text>
    </kinetics>
    <phDependence>
        <text evidence="2">Optimum pH is 7.9 at 25 degrees Celsius.</text>
    </phDependence>
</comment>
<comment type="subcellular location">
    <subcellularLocation>
        <location evidence="4">Plastid</location>
        <location evidence="4">Chloroplast</location>
    </subcellularLocation>
</comment>
<comment type="alternative products">
    <event type="alternative splicing"/>
    <isoform>
        <id>Q9C5W3-1</id>
        <name>1</name>
        <sequence type="displayed"/>
    </isoform>
    <text>A number of isoforms are produced. According to EST sequences.</text>
</comment>
<comment type="tissue specificity">
    <text evidence="3">Expressed in leaves.</text>
</comment>
<comment type="developmental stage">
    <text evidence="2">Expressed during development from young seedlings to flowering plants.</text>
</comment>
<comment type="similarity">
    <text evidence="5">Belongs to the NAD kinase family.</text>
</comment>
<comment type="sequence caution" evidence="5">
    <conflict type="erroneous gene model prediction">
        <sequence resource="EMBL-CDS" id="AAD41416"/>
    </conflict>
</comment>
<gene>
    <name type="primary">NADK2</name>
    <name type="ordered locus">At1g21640</name>
    <name type="ORF">F8K7.5</name>
</gene>